<gene>
    <name type="primary">GLC3</name>
    <name type="ordered locus">CNBA3620</name>
</gene>
<evidence type="ECO:0000250" key="1">
    <source>
        <dbReference type="UniProtKB" id="P32775"/>
    </source>
</evidence>
<evidence type="ECO:0000250" key="2">
    <source>
        <dbReference type="UniProtKB" id="Q04446"/>
    </source>
</evidence>
<evidence type="ECO:0000250" key="3">
    <source>
        <dbReference type="UniProtKB" id="Q6FJV0"/>
    </source>
</evidence>
<evidence type="ECO:0000305" key="4"/>
<proteinExistence type="inferred from homology"/>
<dbReference type="EC" id="2.4.1.18" evidence="2"/>
<dbReference type="EMBL" id="AAEY01000002">
    <property type="protein sequence ID" value="EAL23246.1"/>
    <property type="molecule type" value="Genomic_DNA"/>
</dbReference>
<dbReference type="RefSeq" id="XP_777893.1">
    <property type="nucleotide sequence ID" value="XM_772800.1"/>
</dbReference>
<dbReference type="SMR" id="P0CN83"/>
<dbReference type="EnsemblFungi" id="AAW40900">
    <property type="protein sequence ID" value="AAW40900"/>
    <property type="gene ID" value="CNA03810"/>
</dbReference>
<dbReference type="GeneID" id="4933620"/>
<dbReference type="KEGG" id="cnb:CNBA3620"/>
<dbReference type="VEuPathDB" id="FungiDB:CNBA3620"/>
<dbReference type="HOGENOM" id="CLU_011131_2_2_1"/>
<dbReference type="OrthoDB" id="59at5206"/>
<dbReference type="UniPathway" id="UPA00164"/>
<dbReference type="GO" id="GO:0005737">
    <property type="term" value="C:cytoplasm"/>
    <property type="evidence" value="ECO:0000250"/>
    <property type="project" value="UniProtKB"/>
</dbReference>
<dbReference type="GO" id="GO:0003844">
    <property type="term" value="F:1,4-alpha-glucan branching enzyme activity"/>
    <property type="evidence" value="ECO:0007669"/>
    <property type="project" value="UniProtKB-EC"/>
</dbReference>
<dbReference type="GO" id="GO:0043169">
    <property type="term" value="F:cation binding"/>
    <property type="evidence" value="ECO:0007669"/>
    <property type="project" value="InterPro"/>
</dbReference>
<dbReference type="GO" id="GO:0004553">
    <property type="term" value="F:hydrolase activity, hydrolyzing O-glycosyl compounds"/>
    <property type="evidence" value="ECO:0007669"/>
    <property type="project" value="InterPro"/>
</dbReference>
<dbReference type="GO" id="GO:0005978">
    <property type="term" value="P:glycogen biosynthetic process"/>
    <property type="evidence" value="ECO:0007669"/>
    <property type="project" value="UniProtKB-UniPathway"/>
</dbReference>
<dbReference type="CDD" id="cd11321">
    <property type="entry name" value="AmyAc_bac_euk_BE"/>
    <property type="match status" value="1"/>
</dbReference>
<dbReference type="CDD" id="cd02854">
    <property type="entry name" value="E_set_GBE_euk_N"/>
    <property type="match status" value="1"/>
</dbReference>
<dbReference type="FunFam" id="3.20.20.80:FF:000001">
    <property type="entry name" value="1,4-alpha-glucan branching enzyme"/>
    <property type="match status" value="1"/>
</dbReference>
<dbReference type="FunFam" id="2.60.40.10:FF:000250">
    <property type="entry name" value="1,4-alpha-glucan-branching enzyme, chloroplastic/amyloplastic"/>
    <property type="match status" value="1"/>
</dbReference>
<dbReference type="FunFam" id="2.60.40.1180:FF:000003">
    <property type="entry name" value="1,4-alpha-glucan-branching enzyme, chloroplastic/amyloplastic"/>
    <property type="match status" value="1"/>
</dbReference>
<dbReference type="Gene3D" id="3.20.20.80">
    <property type="entry name" value="Glycosidases"/>
    <property type="match status" value="1"/>
</dbReference>
<dbReference type="Gene3D" id="2.60.40.1180">
    <property type="entry name" value="Golgi alpha-mannosidase II"/>
    <property type="match status" value="1"/>
</dbReference>
<dbReference type="Gene3D" id="2.60.40.10">
    <property type="entry name" value="Immunoglobulins"/>
    <property type="match status" value="1"/>
</dbReference>
<dbReference type="InterPro" id="IPR006048">
    <property type="entry name" value="A-amylase/branching_C"/>
</dbReference>
<dbReference type="InterPro" id="IPR037439">
    <property type="entry name" value="Branching_enzy"/>
</dbReference>
<dbReference type="InterPro" id="IPR006047">
    <property type="entry name" value="Glyco_hydro_13_cat_dom"/>
</dbReference>
<dbReference type="InterPro" id="IPR004193">
    <property type="entry name" value="Glyco_hydro_13_N"/>
</dbReference>
<dbReference type="InterPro" id="IPR013780">
    <property type="entry name" value="Glyco_hydro_b"/>
</dbReference>
<dbReference type="InterPro" id="IPR017853">
    <property type="entry name" value="Glycoside_hydrolase_SF"/>
</dbReference>
<dbReference type="InterPro" id="IPR013783">
    <property type="entry name" value="Ig-like_fold"/>
</dbReference>
<dbReference type="InterPro" id="IPR014756">
    <property type="entry name" value="Ig_E-set"/>
</dbReference>
<dbReference type="PANTHER" id="PTHR43651">
    <property type="entry name" value="1,4-ALPHA-GLUCAN-BRANCHING ENZYME"/>
    <property type="match status" value="1"/>
</dbReference>
<dbReference type="PANTHER" id="PTHR43651:SF3">
    <property type="entry name" value="1,4-ALPHA-GLUCAN-BRANCHING ENZYME"/>
    <property type="match status" value="1"/>
</dbReference>
<dbReference type="Pfam" id="PF00128">
    <property type="entry name" value="Alpha-amylase"/>
    <property type="match status" value="1"/>
</dbReference>
<dbReference type="Pfam" id="PF02806">
    <property type="entry name" value="Alpha-amylase_C"/>
    <property type="match status" value="1"/>
</dbReference>
<dbReference type="Pfam" id="PF02922">
    <property type="entry name" value="CBM_48"/>
    <property type="match status" value="1"/>
</dbReference>
<dbReference type="PIRSF" id="PIRSF000463">
    <property type="entry name" value="GlgB"/>
    <property type="match status" value="1"/>
</dbReference>
<dbReference type="SMART" id="SM00642">
    <property type="entry name" value="Aamy"/>
    <property type="match status" value="1"/>
</dbReference>
<dbReference type="SUPFAM" id="SSF51445">
    <property type="entry name" value="(Trans)glycosidases"/>
    <property type="match status" value="1"/>
</dbReference>
<dbReference type="SUPFAM" id="SSF81296">
    <property type="entry name" value="E set domains"/>
    <property type="match status" value="1"/>
</dbReference>
<dbReference type="SUPFAM" id="SSF51011">
    <property type="entry name" value="Glycosyl hydrolase domain"/>
    <property type="match status" value="1"/>
</dbReference>
<organism>
    <name type="scientific">Cryptococcus neoformans var. neoformans serotype D (strain B-3501A)</name>
    <name type="common">Filobasidiella neoformans</name>
    <dbReference type="NCBI Taxonomy" id="283643"/>
    <lineage>
        <taxon>Eukaryota</taxon>
        <taxon>Fungi</taxon>
        <taxon>Dikarya</taxon>
        <taxon>Basidiomycota</taxon>
        <taxon>Agaricomycotina</taxon>
        <taxon>Tremellomycetes</taxon>
        <taxon>Tremellales</taxon>
        <taxon>Cryptococcaceae</taxon>
        <taxon>Cryptococcus</taxon>
        <taxon>Cryptococcus neoformans species complex</taxon>
    </lineage>
</organism>
<reference key="1">
    <citation type="journal article" date="2005" name="Science">
        <title>The genome of the basidiomycetous yeast and human pathogen Cryptococcus neoformans.</title>
        <authorList>
            <person name="Loftus B.J."/>
            <person name="Fung E."/>
            <person name="Roncaglia P."/>
            <person name="Rowley D."/>
            <person name="Amedeo P."/>
            <person name="Bruno D."/>
            <person name="Vamathevan J."/>
            <person name="Miranda M."/>
            <person name="Anderson I.J."/>
            <person name="Fraser J.A."/>
            <person name="Allen J.E."/>
            <person name="Bosdet I.E."/>
            <person name="Brent M.R."/>
            <person name="Chiu R."/>
            <person name="Doering T.L."/>
            <person name="Donlin M.J."/>
            <person name="D'Souza C.A."/>
            <person name="Fox D.S."/>
            <person name="Grinberg V."/>
            <person name="Fu J."/>
            <person name="Fukushima M."/>
            <person name="Haas B.J."/>
            <person name="Huang J.C."/>
            <person name="Janbon G."/>
            <person name="Jones S.J.M."/>
            <person name="Koo H.L."/>
            <person name="Krzywinski M.I."/>
            <person name="Kwon-Chung K.J."/>
            <person name="Lengeler K.B."/>
            <person name="Maiti R."/>
            <person name="Marra M.A."/>
            <person name="Marra R.E."/>
            <person name="Mathewson C.A."/>
            <person name="Mitchell T.G."/>
            <person name="Pertea M."/>
            <person name="Riggs F.R."/>
            <person name="Salzberg S.L."/>
            <person name="Schein J.E."/>
            <person name="Shvartsbeyn A."/>
            <person name="Shin H."/>
            <person name="Shumway M."/>
            <person name="Specht C.A."/>
            <person name="Suh B.B."/>
            <person name="Tenney A."/>
            <person name="Utterback T.R."/>
            <person name="Wickes B.L."/>
            <person name="Wortman J.R."/>
            <person name="Wye N.H."/>
            <person name="Kronstad J.W."/>
            <person name="Lodge J.K."/>
            <person name="Heitman J."/>
            <person name="Davis R.W."/>
            <person name="Fraser C.M."/>
            <person name="Hyman R.W."/>
        </authorList>
    </citation>
    <scope>NUCLEOTIDE SEQUENCE [LARGE SCALE GENOMIC DNA]</scope>
    <source>
        <strain>B-3501A</strain>
    </source>
</reference>
<name>GLGB_CRYNB</name>
<keyword id="KW-0963">Cytoplasm</keyword>
<keyword id="KW-0320">Glycogen biosynthesis</keyword>
<keyword id="KW-0328">Glycosyltransferase</keyword>
<keyword id="KW-0808">Transferase</keyword>
<accession>P0CN83</accession>
<accession>Q55ZX8</accession>
<accession>Q5KP87</accession>
<comment type="function">
    <text evidence="2">Glycogen-branching enzyme participates in the glycogen biosynthetic process along with glycogenin and glycogen synthase. Generates alpha-1,6-glucosidic branches from alpha-1,4-linked glucose chains, to increase solubility of the glycogen polymer.</text>
</comment>
<comment type="catalytic activity">
    <reaction evidence="2">
        <text>Transfers a segment of a (1-&gt;4)-alpha-D-glucan chain to a primary hydroxy group in a similar glucan chain.</text>
        <dbReference type="EC" id="2.4.1.18"/>
    </reaction>
</comment>
<comment type="pathway">
    <text evidence="2">Glycan biosynthesis; glycogen biosynthesis.</text>
</comment>
<comment type="subcellular location">
    <subcellularLocation>
        <location evidence="1">Cytoplasm</location>
    </subcellularLocation>
    <text evidence="1">Localizes to glycogen granules in the cytoplasm.</text>
</comment>
<comment type="similarity">
    <text evidence="4">Belongs to the glycosyl hydrolase 13 family. GlgB subfamily.</text>
</comment>
<protein>
    <recommendedName>
        <fullName>1,4-alpha-glucan-branching enzyme</fullName>
        <ecNumber evidence="2">2.4.1.18</ecNumber>
    </recommendedName>
    <alternativeName>
        <fullName>Glycogen-branching enzyme</fullName>
    </alternativeName>
</protein>
<sequence length="682" mass="78344">MTAVSLSDGTAVLKTDPWLEPFSGALRERYAAYQKQRTIIEEHEGGLAEFSKGYKSMGFQIDKNGGVRYREWASNATEARLIGEFNNWSHTANPMTKSPFGVWECYVPPVSPGVCAIPHDSMVKISMTLPGGESIDRIPTWITRVTQDLNISPIYDGRFWNPPKEQQYQFKHGHSTRPVEGLKIYEAHVGISSPNMRVTTYKEFEVDVLPKIKQLGYNCIQMMAIMEHAYYASFGYQVTNFFAASSRFGTPEELKSLVDKAHELGLTVLLDVVHSHASKNILDGINMYDGSDHLYFHEGGRGRHDQWDSRLFNYGQHEVLRFLLSNLRFWMDIYMFDGFRFDGVTSMMYKHHGIGSGFSGGYHEYFGDSVDLEAMVYLMLANAMLHETYPHVVTIAEDVSGMPTLCRPVAEGGVGFDYRLSMAIPDMWIKLLKEYTDDQWEMGQIVHNLTNRRHLEKSVAYAESHDQALVGDKTLAFWLMDKEMYDFMSDLSPLTPIIDRGLALHKMIRFIVHTLGGEAYLNFEGNEFGHPEWMDFPREGNGNSFAHARRQFNLVDDKLLRYKYLYEFDVAMNWLEDKYKWLNSPQAYVSLKHEGDKMIVFERAGLLFIFNFHPTQSFTDYRVGVDTAGEYKVILTSDETRFGGHNRIDMGGRYFTTPMEWNGRKNWLQVYSPSRTVLVLGL</sequence>
<feature type="chain" id="PRO_0000410096" description="1,4-alpha-glucan-branching enzyme">
    <location>
        <begin position="1"/>
        <end position="682"/>
    </location>
</feature>
<feature type="active site" description="Nucleophile" evidence="2">
    <location>
        <position position="342"/>
    </location>
</feature>
<feature type="active site" description="Proton donor" evidence="2">
    <location>
        <position position="397"/>
    </location>
</feature>
<feature type="binding site" evidence="3">
    <location>
        <position position="88"/>
    </location>
    <ligand>
        <name>(1,4-alpha-D-glucosyl)n</name>
        <dbReference type="ChEBI" id="CHEBI:15444"/>
    </ligand>
</feature>
<feature type="binding site" evidence="3">
    <location>
        <position position="124"/>
    </location>
    <ligand>
        <name>(1,4-alpha-D-glucosyl)n</name>
        <dbReference type="ChEBI" id="CHEBI:15444"/>
    </ligand>
</feature>
<feature type="site" description="Transition state stabilizer" evidence="2">
    <location>
        <position position="466"/>
    </location>
</feature>